<comment type="function">
    <text evidence="1">ATP-dependent carboxylate-amine ligase which exhibits weak glutamate--cysteine ligase activity.</text>
</comment>
<comment type="catalytic activity">
    <reaction evidence="1">
        <text>L-cysteine + L-glutamate + ATP = gamma-L-glutamyl-L-cysteine + ADP + phosphate + H(+)</text>
        <dbReference type="Rhea" id="RHEA:13285"/>
        <dbReference type="ChEBI" id="CHEBI:15378"/>
        <dbReference type="ChEBI" id="CHEBI:29985"/>
        <dbReference type="ChEBI" id="CHEBI:30616"/>
        <dbReference type="ChEBI" id="CHEBI:35235"/>
        <dbReference type="ChEBI" id="CHEBI:43474"/>
        <dbReference type="ChEBI" id="CHEBI:58173"/>
        <dbReference type="ChEBI" id="CHEBI:456216"/>
        <dbReference type="EC" id="6.3.2.2"/>
    </reaction>
</comment>
<comment type="similarity">
    <text evidence="1">Belongs to the glutamate--cysteine ligase type 2 family. YbdK subfamily.</text>
</comment>
<accession>Q5YW64</accession>
<protein>
    <recommendedName>
        <fullName evidence="1">Putative glutamate--cysteine ligase 2-1</fullName>
        <ecNumber evidence="1">6.3.2.2</ecNumber>
    </recommendedName>
    <alternativeName>
        <fullName evidence="1">Gamma-glutamylcysteine synthetase 2-1</fullName>
        <shortName evidence="1">GCS 2-1</shortName>
        <shortName evidence="1">Gamma-GCS 2-1</shortName>
    </alternativeName>
</protein>
<reference key="1">
    <citation type="journal article" date="2004" name="Proc. Natl. Acad. Sci. U.S.A.">
        <title>The complete genomic sequence of Nocardia farcinica IFM 10152.</title>
        <authorList>
            <person name="Ishikawa J."/>
            <person name="Yamashita A."/>
            <person name="Mikami Y."/>
            <person name="Hoshino Y."/>
            <person name="Kurita H."/>
            <person name="Hotta K."/>
            <person name="Shiba T."/>
            <person name="Hattori M."/>
        </authorList>
    </citation>
    <scope>NUCLEOTIDE SEQUENCE [LARGE SCALE GENOMIC DNA]</scope>
    <source>
        <strain>IFM 10152</strain>
    </source>
</reference>
<dbReference type="EC" id="6.3.2.2" evidence="1"/>
<dbReference type="EMBL" id="AP006618">
    <property type="protein sequence ID" value="BAD57577.1"/>
    <property type="molecule type" value="Genomic_DNA"/>
</dbReference>
<dbReference type="RefSeq" id="WP_011209262.1">
    <property type="nucleotide sequence ID" value="NC_006361.1"/>
</dbReference>
<dbReference type="SMR" id="Q5YW64"/>
<dbReference type="STRING" id="247156.NFA_27300"/>
<dbReference type="GeneID" id="61133469"/>
<dbReference type="KEGG" id="nfa:NFA_27300"/>
<dbReference type="eggNOG" id="COG2170">
    <property type="taxonomic scope" value="Bacteria"/>
</dbReference>
<dbReference type="HOGENOM" id="CLU_044848_0_0_11"/>
<dbReference type="OrthoDB" id="9803842at2"/>
<dbReference type="Proteomes" id="UP000006820">
    <property type="component" value="Chromosome"/>
</dbReference>
<dbReference type="GO" id="GO:0005524">
    <property type="term" value="F:ATP binding"/>
    <property type="evidence" value="ECO:0007669"/>
    <property type="project" value="UniProtKB-KW"/>
</dbReference>
<dbReference type="GO" id="GO:0004357">
    <property type="term" value="F:glutamate-cysteine ligase activity"/>
    <property type="evidence" value="ECO:0007669"/>
    <property type="project" value="UniProtKB-EC"/>
</dbReference>
<dbReference type="GO" id="GO:0042398">
    <property type="term" value="P:modified amino acid biosynthetic process"/>
    <property type="evidence" value="ECO:0007669"/>
    <property type="project" value="InterPro"/>
</dbReference>
<dbReference type="Gene3D" id="3.30.590.20">
    <property type="match status" value="1"/>
</dbReference>
<dbReference type="HAMAP" id="MF_01609">
    <property type="entry name" value="Glu_cys_ligase_2"/>
    <property type="match status" value="1"/>
</dbReference>
<dbReference type="InterPro" id="IPR050141">
    <property type="entry name" value="GCL_type2/YbdK_subfam"/>
</dbReference>
<dbReference type="InterPro" id="IPR006336">
    <property type="entry name" value="GCS2"/>
</dbReference>
<dbReference type="InterPro" id="IPR014746">
    <property type="entry name" value="Gln_synth/guanido_kin_cat_dom"/>
</dbReference>
<dbReference type="InterPro" id="IPR011793">
    <property type="entry name" value="YbdK"/>
</dbReference>
<dbReference type="NCBIfam" id="TIGR02050">
    <property type="entry name" value="gshA_cyan_rel"/>
    <property type="match status" value="1"/>
</dbReference>
<dbReference type="NCBIfam" id="NF010041">
    <property type="entry name" value="PRK13517.1-1"/>
    <property type="match status" value="1"/>
</dbReference>
<dbReference type="PANTHER" id="PTHR36510">
    <property type="entry name" value="GLUTAMATE--CYSTEINE LIGASE 2-RELATED"/>
    <property type="match status" value="1"/>
</dbReference>
<dbReference type="PANTHER" id="PTHR36510:SF1">
    <property type="entry name" value="GLUTAMATE--CYSTEINE LIGASE 2-RELATED"/>
    <property type="match status" value="1"/>
</dbReference>
<dbReference type="Pfam" id="PF04107">
    <property type="entry name" value="GCS2"/>
    <property type="match status" value="1"/>
</dbReference>
<dbReference type="SUPFAM" id="SSF55931">
    <property type="entry name" value="Glutamine synthetase/guanido kinase"/>
    <property type="match status" value="1"/>
</dbReference>
<feature type="chain" id="PRO_0000218209" description="Putative glutamate--cysteine ligase 2-1">
    <location>
        <begin position="1"/>
        <end position="383"/>
    </location>
</feature>
<name>GCS21_NOCFA</name>
<sequence>MDAPTVGVEEEFLLVDPRTGAPTARNEAVAHTAGELGIDLQLELTRCQVETSTAVHSDIGALFGQLRDLRCGVARCAQANESRLLAVAIPPTVPHEFPVTDTPRYRRIAESFGMIAHEQGLCGCHVHVAVPDRETAVQVSNYLRPWLPMLLALTANSAIYRGSDTGYASWRSILWRRWPSAGPPPYFRTAADYDAMVTMMLSSGIVLDEKMVYWDARPSINYPTIEVRVSDVPATVGETVLLAALVRATVHTARRFLAEGNTAPAVPAEVLRAAYWKAARSGIGGDAVAPLDGRVLPARDLLDELLETVDPALEELGDRGFVSDALTALLARGNGAQRQVRAFGADHDVAAVIAELGAATLEGCAPEPANSGGGEHVPVEGRH</sequence>
<keyword id="KW-0067">ATP-binding</keyword>
<keyword id="KW-0436">Ligase</keyword>
<keyword id="KW-0547">Nucleotide-binding</keyword>
<keyword id="KW-1185">Reference proteome</keyword>
<evidence type="ECO:0000255" key="1">
    <source>
        <dbReference type="HAMAP-Rule" id="MF_01609"/>
    </source>
</evidence>
<proteinExistence type="inferred from homology"/>
<organism>
    <name type="scientific">Nocardia farcinica (strain IFM 10152)</name>
    <dbReference type="NCBI Taxonomy" id="247156"/>
    <lineage>
        <taxon>Bacteria</taxon>
        <taxon>Bacillati</taxon>
        <taxon>Actinomycetota</taxon>
        <taxon>Actinomycetes</taxon>
        <taxon>Mycobacteriales</taxon>
        <taxon>Nocardiaceae</taxon>
        <taxon>Nocardia</taxon>
    </lineage>
</organism>
<gene>
    <name type="ordered locus">NFA_27300</name>
</gene>